<keyword id="KW-0186">Copper</keyword>
<keyword id="KW-0903">Direct protein sequencing</keyword>
<keyword id="KW-1015">Disulfide bond</keyword>
<keyword id="KW-0249">Electron transport</keyword>
<keyword id="KW-0325">Glycoprotein</keyword>
<keyword id="KW-0479">Metal-binding</keyword>
<keyword id="KW-0813">Transport</keyword>
<organism>
    <name type="scientific">Toxicodendron vernicifluum</name>
    <name type="common">Japanese lacquer tree</name>
    <name type="synonym">Rhus verniciflua</name>
    <dbReference type="NCBI Taxonomy" id="4013"/>
    <lineage>
        <taxon>Eukaryota</taxon>
        <taxon>Viridiplantae</taxon>
        <taxon>Streptophyta</taxon>
        <taxon>Embryophyta</taxon>
        <taxon>Tracheophyta</taxon>
        <taxon>Spermatophyta</taxon>
        <taxon>Magnoliopsida</taxon>
        <taxon>eudicotyledons</taxon>
        <taxon>Gunneridae</taxon>
        <taxon>Pentapetalae</taxon>
        <taxon>rosids</taxon>
        <taxon>malvids</taxon>
        <taxon>Sapindales</taxon>
        <taxon>Anacardiaceae</taxon>
        <taxon>Toxicodendron</taxon>
    </lineage>
</organism>
<evidence type="ECO:0000255" key="1">
    <source>
        <dbReference type="PROSITE-ProRule" id="PRU00818"/>
    </source>
</evidence>
<evidence type="ECO:0000269" key="2">
    <source>
    </source>
</evidence>
<comment type="biophysicochemical properties">
    <redoxPotential>
        <text>E(0) is +184 mV.</text>
    </redoxPotential>
</comment>
<name>STEL_TOXVR</name>
<protein>
    <recommendedName>
        <fullName>Stellacyanin</fullName>
    </recommendedName>
</protein>
<feature type="chain" id="PRO_0000085556" description="Stellacyanin">
    <location>
        <begin position="1"/>
        <end position="107"/>
    </location>
</feature>
<feature type="domain" description="Phytocyanin" evidence="1">
    <location>
        <begin position="1"/>
        <end position="105"/>
    </location>
</feature>
<feature type="binding site">
    <location>
        <position position="46"/>
    </location>
    <ligand>
        <name>Cu cation</name>
        <dbReference type="ChEBI" id="CHEBI:23378"/>
    </ligand>
</feature>
<feature type="binding site">
    <location>
        <position position="87"/>
    </location>
    <ligand>
        <name>Cu cation</name>
        <dbReference type="ChEBI" id="CHEBI:23378"/>
    </ligand>
</feature>
<feature type="binding site">
    <location>
        <position position="92"/>
    </location>
    <ligand>
        <name>Cu cation</name>
        <dbReference type="ChEBI" id="CHEBI:23378"/>
    </ligand>
</feature>
<feature type="binding site">
    <location>
        <position position="97"/>
    </location>
    <ligand>
        <name>Cu cation</name>
        <dbReference type="ChEBI" id="CHEBI:23378"/>
    </ligand>
</feature>
<feature type="glycosylation site" description="N-linked (GlcNAc...) asparagine" evidence="2">
    <location>
        <position position="28"/>
    </location>
</feature>
<feature type="glycosylation site" description="N-linked (GlcNAc...) asparagine" evidence="2">
    <location>
        <position position="60"/>
    </location>
</feature>
<feature type="glycosylation site" description="N-linked (GlcNAc...) asparagine" evidence="2">
    <location>
        <position position="102"/>
    </location>
</feature>
<feature type="disulfide bond" evidence="1 2">
    <location>
        <begin position="59"/>
        <end position="93"/>
    </location>
</feature>
<proteinExistence type="evidence at protein level"/>
<accession>P00302</accession>
<sequence>TVYTVGDSAGWKVPFFGDVDYDWKWASNKTFHIGDVLVFKYDRRFHNVDKVTQKNYQSCNDTTPIASYNTGBBRINLKTVGQKYYICGVPKHCDLGQKVHINVTVRS</sequence>
<dbReference type="PIR" id="A00311">
    <property type="entry name" value="SSUL"/>
</dbReference>
<dbReference type="iPTMnet" id="P00302"/>
<dbReference type="GO" id="GO:0005886">
    <property type="term" value="C:plasma membrane"/>
    <property type="evidence" value="ECO:0007669"/>
    <property type="project" value="TreeGrafter"/>
</dbReference>
<dbReference type="GO" id="GO:0009055">
    <property type="term" value="F:electron transfer activity"/>
    <property type="evidence" value="ECO:0007669"/>
    <property type="project" value="InterPro"/>
</dbReference>
<dbReference type="GO" id="GO:0046872">
    <property type="term" value="F:metal ion binding"/>
    <property type="evidence" value="ECO:0007669"/>
    <property type="project" value="UniProtKB-KW"/>
</dbReference>
<dbReference type="CDD" id="cd11014">
    <property type="entry name" value="Mavicyanin"/>
    <property type="match status" value="1"/>
</dbReference>
<dbReference type="FunFam" id="2.60.40.420:FF:000003">
    <property type="entry name" value="Blue copper"/>
    <property type="match status" value="1"/>
</dbReference>
<dbReference type="Gene3D" id="2.60.40.420">
    <property type="entry name" value="Cupredoxins - blue copper proteins"/>
    <property type="match status" value="1"/>
</dbReference>
<dbReference type="InterPro" id="IPR028871">
    <property type="entry name" value="BlueCu_1_BS"/>
</dbReference>
<dbReference type="InterPro" id="IPR008972">
    <property type="entry name" value="Cupredoxin"/>
</dbReference>
<dbReference type="InterPro" id="IPR041845">
    <property type="entry name" value="Mavicyanin"/>
</dbReference>
<dbReference type="InterPro" id="IPR039391">
    <property type="entry name" value="Phytocyanin-like"/>
</dbReference>
<dbReference type="InterPro" id="IPR003245">
    <property type="entry name" value="Phytocyanin_dom"/>
</dbReference>
<dbReference type="PANTHER" id="PTHR33021">
    <property type="entry name" value="BLUE COPPER PROTEIN"/>
    <property type="match status" value="1"/>
</dbReference>
<dbReference type="PANTHER" id="PTHR33021:SF339">
    <property type="entry name" value="OS07G0570600 PROTEIN"/>
    <property type="match status" value="1"/>
</dbReference>
<dbReference type="Pfam" id="PF02298">
    <property type="entry name" value="Cu_bind_like"/>
    <property type="match status" value="1"/>
</dbReference>
<dbReference type="SUPFAM" id="SSF49503">
    <property type="entry name" value="Cupredoxins"/>
    <property type="match status" value="1"/>
</dbReference>
<dbReference type="PROSITE" id="PS00196">
    <property type="entry name" value="COPPER_BLUE"/>
    <property type="match status" value="1"/>
</dbReference>
<dbReference type="PROSITE" id="PS51485">
    <property type="entry name" value="PHYTOCYANIN"/>
    <property type="match status" value="1"/>
</dbReference>
<reference key="1">
    <citation type="journal article" date="1977" name="Biochem. Biophys. Res. Commun.">
        <title>The amino acid sequence of stellacyanin from the lacquer tree.</title>
        <authorList>
            <person name="Bergman C."/>
            <person name="Gandvik E.K."/>
            <person name="Nyman P.O."/>
            <person name="Strid L."/>
        </authorList>
    </citation>
    <scope>PROTEIN SEQUENCE</scope>
</reference>
<reference key="2">
    <citation type="journal article" date="1977" name="Biochem. Biophys. Res. Commun.">
        <authorList>
            <person name="Bergman C."/>
            <person name="Gandvik E.K."/>
            <person name="Nyman P.O."/>
            <person name="Strid L."/>
        </authorList>
    </citation>
    <scope>ERRATUM OF PUBMED:901509</scope>
</reference>
<reference key="3">
    <citation type="journal article" date="1984" name="FEBS Lett.">
        <title>A new assignment of the disulfide linkage in stellacyanin.</title>
        <authorList>
            <person name="Engeseth H.R."/>
            <person name="Hermodson M.A."/>
            <person name="McMillin D.R."/>
        </authorList>
    </citation>
    <scope>DISULFIDE BOND</scope>
</reference>
<reference key="4">
    <citation type="journal article" date="1991" name="J. Mol. Biol.">
        <title>Three-dimensional model for stellacyanin, a 'blue' copper-protein.</title>
        <authorList>
            <person name="Fields B.A."/>
            <person name="Guss J.M."/>
            <person name="Freeman H.C."/>
        </authorList>
    </citation>
    <scope>3D-STRUCTURE MODELING</scope>
</reference>